<protein>
    <recommendedName>
        <fullName evidence="1">Elongation factor Ts</fullName>
        <shortName evidence="1">EF-Ts</shortName>
    </recommendedName>
</protein>
<reference key="1">
    <citation type="journal article" date="2006" name="PLoS Genet.">
        <title>Comparative genomics of emerging human ehrlichiosis agents.</title>
        <authorList>
            <person name="Dunning Hotopp J.C."/>
            <person name="Lin M."/>
            <person name="Madupu R."/>
            <person name="Crabtree J."/>
            <person name="Angiuoli S.V."/>
            <person name="Eisen J.A."/>
            <person name="Seshadri R."/>
            <person name="Ren Q."/>
            <person name="Wu M."/>
            <person name="Utterback T.R."/>
            <person name="Smith S."/>
            <person name="Lewis M."/>
            <person name="Khouri H."/>
            <person name="Zhang C."/>
            <person name="Niu H."/>
            <person name="Lin Q."/>
            <person name="Ohashi N."/>
            <person name="Zhi N."/>
            <person name="Nelson W.C."/>
            <person name="Brinkac L.M."/>
            <person name="Dodson R.J."/>
            <person name="Rosovitz M.J."/>
            <person name="Sundaram J.P."/>
            <person name="Daugherty S.C."/>
            <person name="Davidsen T."/>
            <person name="Durkin A.S."/>
            <person name="Gwinn M.L."/>
            <person name="Haft D.H."/>
            <person name="Selengut J.D."/>
            <person name="Sullivan S.A."/>
            <person name="Zafar N."/>
            <person name="Zhou L."/>
            <person name="Benahmed F."/>
            <person name="Forberger H."/>
            <person name="Halpin R."/>
            <person name="Mulligan S."/>
            <person name="Robinson J."/>
            <person name="White O."/>
            <person name="Rikihisa Y."/>
            <person name="Tettelin H."/>
        </authorList>
    </citation>
    <scope>NUCLEOTIDE SEQUENCE [LARGE SCALE GENOMIC DNA]</scope>
    <source>
        <strain>ATCC CRL-10679 / Arkansas</strain>
    </source>
</reference>
<name>EFTS_EHRCR</name>
<accession>Q2GGV3</accession>
<evidence type="ECO:0000255" key="1">
    <source>
        <dbReference type="HAMAP-Rule" id="MF_00050"/>
    </source>
</evidence>
<keyword id="KW-0963">Cytoplasm</keyword>
<keyword id="KW-0251">Elongation factor</keyword>
<keyword id="KW-0648">Protein biosynthesis</keyword>
<keyword id="KW-1185">Reference proteome</keyword>
<dbReference type="EMBL" id="CP000236">
    <property type="protein sequence ID" value="ABD45414.1"/>
    <property type="molecule type" value="Genomic_DNA"/>
</dbReference>
<dbReference type="RefSeq" id="WP_011452649.1">
    <property type="nucleotide sequence ID" value="NC_007799.1"/>
</dbReference>
<dbReference type="SMR" id="Q2GGV3"/>
<dbReference type="STRING" id="205920.ECH_0515"/>
<dbReference type="KEGG" id="ech:ECH_0515"/>
<dbReference type="eggNOG" id="COG0264">
    <property type="taxonomic scope" value="Bacteria"/>
</dbReference>
<dbReference type="HOGENOM" id="CLU_047155_2_0_5"/>
<dbReference type="OrthoDB" id="9808348at2"/>
<dbReference type="Proteomes" id="UP000008320">
    <property type="component" value="Chromosome"/>
</dbReference>
<dbReference type="GO" id="GO:0005737">
    <property type="term" value="C:cytoplasm"/>
    <property type="evidence" value="ECO:0007669"/>
    <property type="project" value="UniProtKB-SubCell"/>
</dbReference>
<dbReference type="GO" id="GO:0003746">
    <property type="term" value="F:translation elongation factor activity"/>
    <property type="evidence" value="ECO:0007669"/>
    <property type="project" value="UniProtKB-UniRule"/>
</dbReference>
<dbReference type="CDD" id="cd14275">
    <property type="entry name" value="UBA_EF-Ts"/>
    <property type="match status" value="1"/>
</dbReference>
<dbReference type="FunFam" id="1.10.8.10:FF:000001">
    <property type="entry name" value="Elongation factor Ts"/>
    <property type="match status" value="1"/>
</dbReference>
<dbReference type="Gene3D" id="1.10.286.20">
    <property type="match status" value="1"/>
</dbReference>
<dbReference type="Gene3D" id="1.10.8.10">
    <property type="entry name" value="DNA helicase RuvA subunit, C-terminal domain"/>
    <property type="match status" value="1"/>
</dbReference>
<dbReference type="Gene3D" id="3.30.479.20">
    <property type="entry name" value="Elongation factor Ts, dimerisation domain"/>
    <property type="match status" value="2"/>
</dbReference>
<dbReference type="HAMAP" id="MF_00050">
    <property type="entry name" value="EF_Ts"/>
    <property type="match status" value="1"/>
</dbReference>
<dbReference type="InterPro" id="IPR036402">
    <property type="entry name" value="EF-Ts_dimer_sf"/>
</dbReference>
<dbReference type="InterPro" id="IPR001816">
    <property type="entry name" value="Transl_elong_EFTs/EF1B"/>
</dbReference>
<dbReference type="InterPro" id="IPR014039">
    <property type="entry name" value="Transl_elong_EFTs/EF1B_dimer"/>
</dbReference>
<dbReference type="InterPro" id="IPR018101">
    <property type="entry name" value="Transl_elong_Ts_CS"/>
</dbReference>
<dbReference type="InterPro" id="IPR009060">
    <property type="entry name" value="UBA-like_sf"/>
</dbReference>
<dbReference type="NCBIfam" id="TIGR00116">
    <property type="entry name" value="tsf"/>
    <property type="match status" value="1"/>
</dbReference>
<dbReference type="PANTHER" id="PTHR11741">
    <property type="entry name" value="ELONGATION FACTOR TS"/>
    <property type="match status" value="1"/>
</dbReference>
<dbReference type="PANTHER" id="PTHR11741:SF0">
    <property type="entry name" value="ELONGATION FACTOR TS, MITOCHONDRIAL"/>
    <property type="match status" value="1"/>
</dbReference>
<dbReference type="Pfam" id="PF00889">
    <property type="entry name" value="EF_TS"/>
    <property type="match status" value="1"/>
</dbReference>
<dbReference type="SUPFAM" id="SSF54713">
    <property type="entry name" value="Elongation factor Ts (EF-Ts), dimerisation domain"/>
    <property type="match status" value="1"/>
</dbReference>
<dbReference type="SUPFAM" id="SSF46934">
    <property type="entry name" value="UBA-like"/>
    <property type="match status" value="1"/>
</dbReference>
<dbReference type="PROSITE" id="PS01126">
    <property type="entry name" value="EF_TS_1"/>
    <property type="match status" value="1"/>
</dbReference>
<dbReference type="PROSITE" id="PS01127">
    <property type="entry name" value="EF_TS_2"/>
    <property type="match status" value="1"/>
</dbReference>
<gene>
    <name evidence="1" type="primary">tsf</name>
    <name type="ordered locus">ECH_0515</name>
</gene>
<feature type="chain" id="PRO_0000241480" description="Elongation factor Ts">
    <location>
        <begin position="1"/>
        <end position="288"/>
    </location>
</feature>
<feature type="region of interest" description="Involved in Mg(2+) ion dislocation from EF-Tu" evidence="1">
    <location>
        <begin position="79"/>
        <end position="82"/>
    </location>
</feature>
<comment type="function">
    <text evidence="1">Associates with the EF-Tu.GDP complex and induces the exchange of GDP to GTP. It remains bound to the aminoacyl-tRNA.EF-Tu.GTP complex up to the GTP hydrolysis stage on the ribosome.</text>
</comment>
<comment type="subcellular location">
    <subcellularLocation>
        <location evidence="1">Cytoplasm</location>
    </subcellularLocation>
</comment>
<comment type="similarity">
    <text evidence="1">Belongs to the EF-Ts family.</text>
</comment>
<organism>
    <name type="scientific">Ehrlichia chaffeensis (strain ATCC CRL-10679 / Arkansas)</name>
    <dbReference type="NCBI Taxonomy" id="205920"/>
    <lineage>
        <taxon>Bacteria</taxon>
        <taxon>Pseudomonadati</taxon>
        <taxon>Pseudomonadota</taxon>
        <taxon>Alphaproteobacteria</taxon>
        <taxon>Rickettsiales</taxon>
        <taxon>Anaplasmataceae</taxon>
        <taxon>Ehrlichia</taxon>
    </lineage>
</organism>
<sequence length="288" mass="31567">MKVDINAVKELRNLTGAGVGDCKEALNSCGGDIEKAKNYLREQGIAKAYKKSTKDVSDGLVAVHVNGNQGAILEVNSETDFVARNEKFQKLVLNLVSLANQYAVEDIEDFLKHEYVSGTSIHDEIMTNIAVIGENIHLNKIGYLSVNAGVVGGYIHSPVVNNLGKIGAIVALESTADNDKLNVLARQIAMHIVAARPEALSVDLLDKDILDKEREIIKKQVDQLNKPVSVAERIIDGRIAKFYQDVVLLEQIFVMDNQLTISELIKKKESELGASINLVGYKLFVISK</sequence>
<proteinExistence type="inferred from homology"/>